<gene>
    <name type="primary">nag096</name>
</gene>
<comment type="catalytic activity">
    <reaction>
        <text>Hydrolysis of terminal non-reducing N-acetyl-D-hexosamine residues in N-acetyl-beta-D-hexosaminides.</text>
        <dbReference type="EC" id="3.2.1.52"/>
    </reaction>
</comment>
<comment type="similarity">
    <text evidence="3">Belongs to the glycosyl hydrolase 20 family.</text>
</comment>
<feature type="signal peptide" evidence="2">
    <location>
        <begin position="1"/>
        <end position="19"/>
    </location>
</feature>
<feature type="chain" id="PRO_0000012015" description="Beta-hexosaminidase B">
    <location>
        <begin position="20"/>
        <end position="773"/>
    </location>
</feature>
<feature type="active site" description="Proton donor" evidence="1">
    <location>
        <position position="531"/>
    </location>
</feature>
<feature type="disulfide bond" evidence="1">
    <location>
        <begin position="46"/>
        <end position="53"/>
    </location>
</feature>
<feature type="disulfide bond" evidence="1">
    <location>
        <begin position="389"/>
        <end position="397"/>
    </location>
</feature>
<feature type="disulfide bond" evidence="1">
    <location>
        <begin position="496"/>
        <end position="542"/>
    </location>
</feature>
<dbReference type="EC" id="3.2.1.52"/>
<dbReference type="EMBL" id="D29665">
    <property type="protein sequence ID" value="BAA06136.1"/>
    <property type="molecule type" value="Genomic_DNA"/>
</dbReference>
<dbReference type="SMR" id="P49007"/>
<dbReference type="STRING" id="43662.TW75_19265"/>
<dbReference type="CAZy" id="GH20">
    <property type="family name" value="Glycoside Hydrolase Family 20"/>
</dbReference>
<dbReference type="GO" id="GO:0016020">
    <property type="term" value="C:membrane"/>
    <property type="evidence" value="ECO:0007669"/>
    <property type="project" value="TreeGrafter"/>
</dbReference>
<dbReference type="GO" id="GO:0004563">
    <property type="term" value="F:beta-N-acetylhexosaminidase activity"/>
    <property type="evidence" value="ECO:0007669"/>
    <property type="project" value="UniProtKB-EC"/>
</dbReference>
<dbReference type="GO" id="GO:0030247">
    <property type="term" value="F:polysaccharide binding"/>
    <property type="evidence" value="ECO:0007669"/>
    <property type="project" value="InterPro"/>
</dbReference>
<dbReference type="GO" id="GO:0005975">
    <property type="term" value="P:carbohydrate metabolic process"/>
    <property type="evidence" value="ECO:0007669"/>
    <property type="project" value="InterPro"/>
</dbReference>
<dbReference type="GO" id="GO:0030203">
    <property type="term" value="P:glycosaminoglycan metabolic process"/>
    <property type="evidence" value="ECO:0007669"/>
    <property type="project" value="TreeGrafter"/>
</dbReference>
<dbReference type="CDD" id="cd06569">
    <property type="entry name" value="GH20_Sm-chitobiase-like"/>
    <property type="match status" value="1"/>
</dbReference>
<dbReference type="Gene3D" id="2.60.40.290">
    <property type="match status" value="1"/>
</dbReference>
<dbReference type="Gene3D" id="3.30.379.10">
    <property type="entry name" value="Chitobiase/beta-hexosaminidase domain 2-like"/>
    <property type="match status" value="1"/>
</dbReference>
<dbReference type="Gene3D" id="3.20.20.80">
    <property type="entry name" value="Glycosidases"/>
    <property type="match status" value="1"/>
</dbReference>
<dbReference type="InterPro" id="IPR025705">
    <property type="entry name" value="Beta_hexosaminidase_sua/sub"/>
</dbReference>
<dbReference type="InterPro" id="IPR008965">
    <property type="entry name" value="CBM2/CBM3_carb-bd_dom_sf"/>
</dbReference>
<dbReference type="InterPro" id="IPR012291">
    <property type="entry name" value="CBM2_carb-bd_dom_sf"/>
</dbReference>
<dbReference type="InterPro" id="IPR004866">
    <property type="entry name" value="CHB/HEX_N_dom"/>
</dbReference>
<dbReference type="InterPro" id="IPR015883">
    <property type="entry name" value="Glyco_hydro_20_cat"/>
</dbReference>
<dbReference type="InterPro" id="IPR017853">
    <property type="entry name" value="Glycoside_hydrolase_SF"/>
</dbReference>
<dbReference type="InterPro" id="IPR029018">
    <property type="entry name" value="Hex-like_dom2"/>
</dbReference>
<dbReference type="InterPro" id="IPR015882">
    <property type="entry name" value="HEX_bac_N"/>
</dbReference>
<dbReference type="PANTHER" id="PTHR22600">
    <property type="entry name" value="BETA-HEXOSAMINIDASE"/>
    <property type="match status" value="1"/>
</dbReference>
<dbReference type="PANTHER" id="PTHR22600:SF57">
    <property type="entry name" value="BETA-N-ACETYLHEXOSAMINIDASE"/>
    <property type="match status" value="1"/>
</dbReference>
<dbReference type="Pfam" id="PF03173">
    <property type="entry name" value="CHB_HEX"/>
    <property type="match status" value="1"/>
</dbReference>
<dbReference type="Pfam" id="PF00728">
    <property type="entry name" value="Glyco_hydro_20"/>
    <property type="match status" value="1"/>
</dbReference>
<dbReference type="Pfam" id="PF02838">
    <property type="entry name" value="Glyco_hydro_20b"/>
    <property type="match status" value="1"/>
</dbReference>
<dbReference type="PRINTS" id="PR00738">
    <property type="entry name" value="GLHYDRLASE20"/>
</dbReference>
<dbReference type="SMART" id="SM01081">
    <property type="entry name" value="CHB_HEX"/>
    <property type="match status" value="1"/>
</dbReference>
<dbReference type="SUPFAM" id="SSF51445">
    <property type="entry name" value="(Trans)glycosidases"/>
    <property type="match status" value="1"/>
</dbReference>
<dbReference type="SUPFAM" id="SSF55545">
    <property type="entry name" value="beta-N-acetylhexosaminidase-like domain"/>
    <property type="match status" value="1"/>
</dbReference>
<dbReference type="SUPFAM" id="SSF49384">
    <property type="entry name" value="Carbohydrate-binding domain"/>
    <property type="match status" value="1"/>
</dbReference>
<accession>P49007</accession>
<sequence>MKFNRLMALLFGVSSPLYALDQTAVNWLGQNLDVKYTLLDTKPTTCPKAQQKCYYSELSFSVRKENTKANNDFAIFFSQLMPIYHVEGDNFAITHINGDIHKITPAAGFSGFSSAPTTVRFYTKDSQVTRSEVYAKLCCERTRSLKLTPQVIKSTQTQRDNDTGLDCNLNLTPFVTLNQLQTSSKDDTPWMGSEYLYQHQVKPTLDAAIGLIPKPKQLTVLSDKRLNLAAGINLQLSGISADAIAMAQQRLNTLGVKSTKEGLVVNVAVKPNKQSSPHYQLTVAENNISIQGNNSAAAFYALQSLAGLLDINDLRIPMVDIIDTPRYDFRGLHVDVARNFRSKAFILQTIEQMAAYKLNKLHLHLADDEGWRLAIDGLDELTSVGAYRCFDLTETRCLLPQLGAGNDKNAQVNGFYSAEDYIEILRYAKAHHIEVLPSLDMPGHSRAAIIAMEARYKKLMAQGKPEDAQKYRLVETADKTRYSSIQHYNDNTLNVCIANTYTFIDKVLSEVKVLHDRAGVPLNTYHIGADETAVLWLESPACKKLQASVKDFTNFNGYFIERVAKLLDKKGIQVAGWSDGLGDVRAANMPANIQSNGLGDIKRKRAPVAHRFANQGWQVVLSSPDVTYFDFPYQSHPEERGNHWASRAIESKKMFEFMPDNLPAHAEIWKNTNNHAYIANDSDSSLNKGVQFAGLQGHLWSEMLRSDAQAEYMLYPRLLALAERAWHHAEWELPYQAGRIYSQSSGYFTAKLQAQREADWQRFVAILGNSRTT</sequence>
<keyword id="KW-1015">Disulfide bond</keyword>
<keyword id="KW-0326">Glycosidase</keyword>
<keyword id="KW-0378">Hydrolase</keyword>
<keyword id="KW-0732">Signal</keyword>
<proteinExistence type="inferred from homology"/>
<evidence type="ECO:0000250" key="1"/>
<evidence type="ECO:0000255" key="2"/>
<evidence type="ECO:0000305" key="3"/>
<organism>
    <name type="scientific">Pseudoalteromonas piscicida</name>
    <dbReference type="NCBI Taxonomy" id="43662"/>
    <lineage>
        <taxon>Bacteria</taxon>
        <taxon>Pseudomonadati</taxon>
        <taxon>Pseudomonadota</taxon>
        <taxon>Gammaproteobacteria</taxon>
        <taxon>Alteromonadales</taxon>
        <taxon>Pseudoalteromonadaceae</taxon>
        <taxon>Pseudoalteromonas</taxon>
    </lineage>
</organism>
<protein>
    <recommendedName>
        <fullName>Beta-hexosaminidase B</fullName>
        <ecNumber>3.2.1.52</ecNumber>
    </recommendedName>
    <alternativeName>
        <fullName>Beta-GlcNAcase</fullName>
    </alternativeName>
    <alternativeName>
        <fullName>Beta-N-acetylhexosaminidase</fullName>
        <shortName>Beta-NAHase</shortName>
    </alternativeName>
    <alternativeName>
        <fullName>N-acetyl-beta-glucosaminidase</fullName>
    </alternativeName>
</protein>
<name>HEXB_PSEO7</name>
<reference key="1">
    <citation type="journal article" date="1995" name="Appl. Environ. Microbiol.">
        <title>Molecular cloning of the gene which encodes beta-N-acetylglucosaminidase from a marine bacterium, Alteromonas sp. strain O-7.</title>
        <authorList>
            <person name="Tsujibo H."/>
            <person name="Fujimoto K."/>
            <person name="Tanno H."/>
            <person name="Miyamoto K."/>
            <person name="Kimura Y."/>
            <person name="Imada C."/>
            <person name="Okami Y."/>
            <person name="Inamori Y."/>
        </authorList>
    </citation>
    <scope>NUCLEOTIDE SEQUENCE [GENOMIC DNA]</scope>
    <source>
        <strain>O-7</strain>
    </source>
</reference>